<dbReference type="EC" id="2.7.1.148" evidence="1"/>
<dbReference type="EMBL" id="AE004091">
    <property type="protein sequence ID" value="AAG08056.1"/>
    <property type="molecule type" value="Genomic_DNA"/>
</dbReference>
<dbReference type="EMBL" id="X82071">
    <property type="protein sequence ID" value="CAA57570.1"/>
    <property type="molecule type" value="Genomic_DNA"/>
</dbReference>
<dbReference type="PIR" id="F83063">
    <property type="entry name" value="F83063"/>
</dbReference>
<dbReference type="PIR" id="S49374">
    <property type="entry name" value="S49374"/>
</dbReference>
<dbReference type="RefSeq" id="WP_003099284.1">
    <property type="nucleotide sequence ID" value="NZ_QZGE01000029.1"/>
</dbReference>
<dbReference type="SMR" id="P42805"/>
<dbReference type="FunCoup" id="P42805">
    <property type="interactions" value="325"/>
</dbReference>
<dbReference type="STRING" id="208964.PA4669"/>
<dbReference type="PaxDb" id="208964-PA4669"/>
<dbReference type="KEGG" id="pae:PA4669"/>
<dbReference type="PATRIC" id="fig|208964.12.peg.4891"/>
<dbReference type="PseudoCAP" id="PA4669"/>
<dbReference type="HOGENOM" id="CLU_053057_3_0_6"/>
<dbReference type="InParanoid" id="P42805"/>
<dbReference type="OrthoDB" id="9809438at2"/>
<dbReference type="PhylomeDB" id="P42805"/>
<dbReference type="BioCyc" id="PAER208964:G1FZ6-4765-MONOMER"/>
<dbReference type="UniPathway" id="UPA00056">
    <property type="reaction ID" value="UER00094"/>
</dbReference>
<dbReference type="Proteomes" id="UP000002438">
    <property type="component" value="Chromosome"/>
</dbReference>
<dbReference type="GO" id="GO:0050515">
    <property type="term" value="F:4-(cytidine 5'-diphospho)-2-C-methyl-D-erythritol kinase activity"/>
    <property type="evidence" value="ECO:0000318"/>
    <property type="project" value="GO_Central"/>
</dbReference>
<dbReference type="GO" id="GO:0005524">
    <property type="term" value="F:ATP binding"/>
    <property type="evidence" value="ECO:0007669"/>
    <property type="project" value="UniProtKB-UniRule"/>
</dbReference>
<dbReference type="GO" id="GO:0019288">
    <property type="term" value="P:isopentenyl diphosphate biosynthetic process, methylerythritol 4-phosphate pathway"/>
    <property type="evidence" value="ECO:0007669"/>
    <property type="project" value="UniProtKB-UniRule"/>
</dbReference>
<dbReference type="GO" id="GO:0016114">
    <property type="term" value="P:terpenoid biosynthetic process"/>
    <property type="evidence" value="ECO:0007669"/>
    <property type="project" value="InterPro"/>
</dbReference>
<dbReference type="FunFam" id="3.30.230.10:FF:000022">
    <property type="entry name" value="4-diphosphocytidyl-2-C-methyl-D-erythritol kinase"/>
    <property type="match status" value="1"/>
</dbReference>
<dbReference type="Gene3D" id="3.30.230.10">
    <property type="match status" value="1"/>
</dbReference>
<dbReference type="Gene3D" id="3.30.70.890">
    <property type="entry name" value="GHMP kinase, C-terminal domain"/>
    <property type="match status" value="1"/>
</dbReference>
<dbReference type="HAMAP" id="MF_00061">
    <property type="entry name" value="IspE"/>
    <property type="match status" value="1"/>
</dbReference>
<dbReference type="InterPro" id="IPR013750">
    <property type="entry name" value="GHMP_kinase_C_dom"/>
</dbReference>
<dbReference type="InterPro" id="IPR036554">
    <property type="entry name" value="GHMP_kinase_C_sf"/>
</dbReference>
<dbReference type="InterPro" id="IPR006204">
    <property type="entry name" value="GHMP_kinase_N_dom"/>
</dbReference>
<dbReference type="InterPro" id="IPR004424">
    <property type="entry name" value="IspE"/>
</dbReference>
<dbReference type="InterPro" id="IPR020568">
    <property type="entry name" value="Ribosomal_Su5_D2-typ_SF"/>
</dbReference>
<dbReference type="InterPro" id="IPR014721">
    <property type="entry name" value="Ribsml_uS5_D2-typ_fold_subgr"/>
</dbReference>
<dbReference type="NCBIfam" id="TIGR00154">
    <property type="entry name" value="ispE"/>
    <property type="match status" value="1"/>
</dbReference>
<dbReference type="PANTHER" id="PTHR43527">
    <property type="entry name" value="4-DIPHOSPHOCYTIDYL-2-C-METHYL-D-ERYTHRITOL KINASE, CHLOROPLASTIC"/>
    <property type="match status" value="1"/>
</dbReference>
<dbReference type="PANTHER" id="PTHR43527:SF2">
    <property type="entry name" value="4-DIPHOSPHOCYTIDYL-2-C-METHYL-D-ERYTHRITOL KINASE, CHLOROPLASTIC"/>
    <property type="match status" value="1"/>
</dbReference>
<dbReference type="Pfam" id="PF08544">
    <property type="entry name" value="GHMP_kinases_C"/>
    <property type="match status" value="1"/>
</dbReference>
<dbReference type="Pfam" id="PF00288">
    <property type="entry name" value="GHMP_kinases_N"/>
    <property type="match status" value="1"/>
</dbReference>
<dbReference type="PIRSF" id="PIRSF010376">
    <property type="entry name" value="IspE"/>
    <property type="match status" value="1"/>
</dbReference>
<dbReference type="SUPFAM" id="SSF55060">
    <property type="entry name" value="GHMP Kinase, C-terminal domain"/>
    <property type="match status" value="1"/>
</dbReference>
<dbReference type="SUPFAM" id="SSF54211">
    <property type="entry name" value="Ribosomal protein S5 domain 2-like"/>
    <property type="match status" value="1"/>
</dbReference>
<protein>
    <recommendedName>
        <fullName evidence="1">4-diphosphocytidyl-2-C-methyl-D-erythritol kinase</fullName>
        <shortName evidence="1">CMK</shortName>
        <ecNumber evidence="1">2.7.1.148</ecNumber>
    </recommendedName>
    <alternativeName>
        <fullName evidence="1">4-(cytidine-5'-diphospho)-2-C-methyl-D-erythritol kinase</fullName>
    </alternativeName>
</protein>
<accession>P42805</accession>
<organism>
    <name type="scientific">Pseudomonas aeruginosa (strain ATCC 15692 / DSM 22644 / CIP 104116 / JCM 14847 / LMG 12228 / 1C / PRS 101 / PAO1)</name>
    <dbReference type="NCBI Taxonomy" id="208964"/>
    <lineage>
        <taxon>Bacteria</taxon>
        <taxon>Pseudomonadati</taxon>
        <taxon>Pseudomonadota</taxon>
        <taxon>Gammaproteobacteria</taxon>
        <taxon>Pseudomonadales</taxon>
        <taxon>Pseudomonadaceae</taxon>
        <taxon>Pseudomonas</taxon>
    </lineage>
</organism>
<reference key="1">
    <citation type="journal article" date="2000" name="Nature">
        <title>Complete genome sequence of Pseudomonas aeruginosa PAO1, an opportunistic pathogen.</title>
        <authorList>
            <person name="Stover C.K."/>
            <person name="Pham X.-Q.T."/>
            <person name="Erwin A.L."/>
            <person name="Mizoguchi S.D."/>
            <person name="Warrener P."/>
            <person name="Hickey M.J."/>
            <person name="Brinkman F.S.L."/>
            <person name="Hufnagle W.O."/>
            <person name="Kowalik D.J."/>
            <person name="Lagrou M."/>
            <person name="Garber R.L."/>
            <person name="Goltry L."/>
            <person name="Tolentino E."/>
            <person name="Westbrock-Wadman S."/>
            <person name="Yuan Y."/>
            <person name="Brody L.L."/>
            <person name="Coulter S.N."/>
            <person name="Folger K.R."/>
            <person name="Kas A."/>
            <person name="Larbig K."/>
            <person name="Lim R.M."/>
            <person name="Smith K.A."/>
            <person name="Spencer D.H."/>
            <person name="Wong G.K.-S."/>
            <person name="Wu Z."/>
            <person name="Paulsen I.T."/>
            <person name="Reizer J."/>
            <person name="Saier M.H. Jr."/>
            <person name="Hancock R.E.W."/>
            <person name="Lory S."/>
            <person name="Olson M.V."/>
        </authorList>
    </citation>
    <scope>NUCLEOTIDE SEQUENCE [LARGE SCALE GENOMIC DNA]</scope>
    <source>
        <strain>ATCC 15692 / DSM 22644 / CIP 104116 / JCM 14847 / LMG 12228 / 1C / PRS 101 / PAO1</strain>
    </source>
</reference>
<reference key="2">
    <citation type="journal article" date="1995" name="J. Bacteriol.">
        <title>Regulation of the hemA gene during 5-aminolevulinic acid formation in Pseudomonas aeruginosa.</title>
        <authorList>
            <person name="Hungerer C."/>
            <person name="Troup B."/>
            <person name="Roemling U."/>
            <person name="Jahn D."/>
        </authorList>
    </citation>
    <scope>NUCLEOTIDE SEQUENCE [GENOMIC DNA] OF 1-221</scope>
    <source>
        <strain>ATCC 15692 / DSM 22644 / CIP 104116 / JCM 14847 / LMG 12228 / 1C / PRS 101 / PAO1</strain>
    </source>
</reference>
<name>ISPE_PSEAE</name>
<sequence length="282" mass="30843">MSVRLSLPAPAKLNLFLHILGRRDDGYHELQTLFQFLDHGDELHFEARQDGQVRLHTEIAGVPHDSNLIVRAARGLQEASGSPQGVDIWLDKRLPMGGGIGGGSSDAATTLLALNHLWQLGWDEDRIAALGLRLGADVPVFTRGRAAFAEGVGEKLTPVDIPEPWYLVVVPQVLVSTAEIFSDPLLTRDSPAIKVRTVLEGDSRNDCQPVVERRYPEVRNALILLNKFVSARLTGTGGCVFGSFPNKAEADKVSALLPDHLQRFVAKGSNISMLHRKLETLV</sequence>
<gene>
    <name evidence="1" type="primary">ispE</name>
    <name type="ordered locus">PA4669</name>
</gene>
<feature type="chain" id="PRO_0000189249" description="4-diphosphocytidyl-2-C-methyl-D-erythritol kinase">
    <location>
        <begin position="1"/>
        <end position="282"/>
    </location>
</feature>
<feature type="active site" evidence="1">
    <location>
        <position position="12"/>
    </location>
</feature>
<feature type="active site" evidence="1">
    <location>
        <position position="137"/>
    </location>
</feature>
<feature type="binding site" evidence="1">
    <location>
        <begin position="95"/>
        <end position="105"/>
    </location>
    <ligand>
        <name>ATP</name>
        <dbReference type="ChEBI" id="CHEBI:30616"/>
    </ligand>
</feature>
<comment type="function">
    <text evidence="1">Catalyzes the phosphorylation of the position 2 hydroxy group of 4-diphosphocytidyl-2C-methyl-D-erythritol.</text>
</comment>
<comment type="catalytic activity">
    <reaction evidence="1">
        <text>4-CDP-2-C-methyl-D-erythritol + ATP = 4-CDP-2-C-methyl-D-erythritol 2-phosphate + ADP + H(+)</text>
        <dbReference type="Rhea" id="RHEA:18437"/>
        <dbReference type="ChEBI" id="CHEBI:15378"/>
        <dbReference type="ChEBI" id="CHEBI:30616"/>
        <dbReference type="ChEBI" id="CHEBI:57823"/>
        <dbReference type="ChEBI" id="CHEBI:57919"/>
        <dbReference type="ChEBI" id="CHEBI:456216"/>
        <dbReference type="EC" id="2.7.1.148"/>
    </reaction>
</comment>
<comment type="pathway">
    <text evidence="1">Isoprenoid biosynthesis; isopentenyl diphosphate biosynthesis via DXP pathway; isopentenyl diphosphate from 1-deoxy-D-xylulose 5-phosphate: step 3/6.</text>
</comment>
<comment type="similarity">
    <text evidence="1">Belongs to the GHMP kinase family. IspE subfamily.</text>
</comment>
<proteinExistence type="inferred from homology"/>
<evidence type="ECO:0000255" key="1">
    <source>
        <dbReference type="HAMAP-Rule" id="MF_00061"/>
    </source>
</evidence>
<keyword id="KW-0067">ATP-binding</keyword>
<keyword id="KW-0414">Isoprene biosynthesis</keyword>
<keyword id="KW-0418">Kinase</keyword>
<keyword id="KW-0547">Nucleotide-binding</keyword>
<keyword id="KW-1185">Reference proteome</keyword>
<keyword id="KW-0808">Transferase</keyword>